<proteinExistence type="evidence at transcript level"/>
<feature type="chain" id="PRO_0000074268" description="Dof zinc finger protein DOF1.6">
    <location>
        <begin position="1"/>
        <end position="209"/>
    </location>
</feature>
<feature type="zinc finger region" description="Dof-type" evidence="2">
    <location>
        <begin position="29"/>
        <end position="83"/>
    </location>
</feature>
<feature type="region of interest" description="Disordered" evidence="3">
    <location>
        <begin position="1"/>
        <end position="29"/>
    </location>
</feature>
<feature type="region of interest" description="Disordered" evidence="3">
    <location>
        <begin position="70"/>
        <end position="116"/>
    </location>
</feature>
<feature type="compositionally biased region" description="Polar residues" evidence="3">
    <location>
        <begin position="1"/>
        <end position="17"/>
    </location>
</feature>
<feature type="compositionally biased region" description="Pro residues" evidence="3">
    <location>
        <begin position="20"/>
        <end position="29"/>
    </location>
</feature>
<feature type="compositionally biased region" description="Low complexity" evidence="3">
    <location>
        <begin position="89"/>
        <end position="116"/>
    </location>
</feature>
<feature type="binding site" evidence="2">
    <location>
        <position position="31"/>
    </location>
    <ligand>
        <name>Zn(2+)</name>
        <dbReference type="ChEBI" id="CHEBI:29105"/>
    </ligand>
</feature>
<feature type="binding site" evidence="2">
    <location>
        <position position="34"/>
    </location>
    <ligand>
        <name>Zn(2+)</name>
        <dbReference type="ChEBI" id="CHEBI:29105"/>
    </ligand>
</feature>
<feature type="binding site" evidence="2">
    <location>
        <position position="56"/>
    </location>
    <ligand>
        <name>Zn(2+)</name>
        <dbReference type="ChEBI" id="CHEBI:29105"/>
    </ligand>
</feature>
<feature type="binding site" evidence="2">
    <location>
        <position position="59"/>
    </location>
    <ligand>
        <name>Zn(2+)</name>
        <dbReference type="ChEBI" id="CHEBI:29105"/>
    </ligand>
</feature>
<gene>
    <name type="primary">DOF1.6</name>
    <name type="ordered locus">At1g47655</name>
    <name type="ORF">F16N3.5</name>
</gene>
<protein>
    <recommendedName>
        <fullName>Dof zinc finger protein DOF1.6</fullName>
        <shortName>AtDOF1.6</shortName>
    </recommendedName>
</protein>
<comment type="function">
    <text evidence="1">Transcription factor that binds specifically to a 5'-AA[AG]G-3' consensus core sequence.</text>
</comment>
<comment type="subcellular location">
    <subcellularLocation>
        <location evidence="4">Nucleus</location>
    </subcellularLocation>
</comment>
<reference key="1">
    <citation type="journal article" date="2000" name="Nature">
        <title>Sequence and analysis of chromosome 1 of the plant Arabidopsis thaliana.</title>
        <authorList>
            <person name="Theologis A."/>
            <person name="Ecker J.R."/>
            <person name="Palm C.J."/>
            <person name="Federspiel N.A."/>
            <person name="Kaul S."/>
            <person name="White O."/>
            <person name="Alonso J."/>
            <person name="Altafi H."/>
            <person name="Araujo R."/>
            <person name="Bowman C.L."/>
            <person name="Brooks S.Y."/>
            <person name="Buehler E."/>
            <person name="Chan A."/>
            <person name="Chao Q."/>
            <person name="Chen H."/>
            <person name="Cheuk R.F."/>
            <person name="Chin C.W."/>
            <person name="Chung M.K."/>
            <person name="Conn L."/>
            <person name="Conway A.B."/>
            <person name="Conway A.R."/>
            <person name="Creasy T.H."/>
            <person name="Dewar K."/>
            <person name="Dunn P."/>
            <person name="Etgu P."/>
            <person name="Feldblyum T.V."/>
            <person name="Feng J.-D."/>
            <person name="Fong B."/>
            <person name="Fujii C.Y."/>
            <person name="Gill J.E."/>
            <person name="Goldsmith A.D."/>
            <person name="Haas B."/>
            <person name="Hansen N.F."/>
            <person name="Hughes B."/>
            <person name="Huizar L."/>
            <person name="Hunter J.L."/>
            <person name="Jenkins J."/>
            <person name="Johnson-Hopson C."/>
            <person name="Khan S."/>
            <person name="Khaykin E."/>
            <person name="Kim C.J."/>
            <person name="Koo H.L."/>
            <person name="Kremenetskaia I."/>
            <person name="Kurtz D.B."/>
            <person name="Kwan A."/>
            <person name="Lam B."/>
            <person name="Langin-Hooper S."/>
            <person name="Lee A."/>
            <person name="Lee J.M."/>
            <person name="Lenz C.A."/>
            <person name="Li J.H."/>
            <person name="Li Y.-P."/>
            <person name="Lin X."/>
            <person name="Liu S.X."/>
            <person name="Liu Z.A."/>
            <person name="Luros J.S."/>
            <person name="Maiti R."/>
            <person name="Marziali A."/>
            <person name="Militscher J."/>
            <person name="Miranda M."/>
            <person name="Nguyen M."/>
            <person name="Nierman W.C."/>
            <person name="Osborne B.I."/>
            <person name="Pai G."/>
            <person name="Peterson J."/>
            <person name="Pham P.K."/>
            <person name="Rizzo M."/>
            <person name="Rooney T."/>
            <person name="Rowley D."/>
            <person name="Sakano H."/>
            <person name="Salzberg S.L."/>
            <person name="Schwartz J.R."/>
            <person name="Shinn P."/>
            <person name="Southwick A.M."/>
            <person name="Sun H."/>
            <person name="Tallon L.J."/>
            <person name="Tambunga G."/>
            <person name="Toriumi M.J."/>
            <person name="Town C.D."/>
            <person name="Utterback T."/>
            <person name="Van Aken S."/>
            <person name="Vaysberg M."/>
            <person name="Vysotskaia V.S."/>
            <person name="Walker M."/>
            <person name="Wu D."/>
            <person name="Yu G."/>
            <person name="Fraser C.M."/>
            <person name="Venter J.C."/>
            <person name="Davis R.W."/>
        </authorList>
    </citation>
    <scope>NUCLEOTIDE SEQUENCE [LARGE SCALE GENOMIC DNA]</scope>
    <source>
        <strain>cv. Columbia</strain>
    </source>
</reference>
<reference key="2">
    <citation type="journal article" date="2017" name="Plant J.">
        <title>Araport11: a complete reannotation of the Arabidopsis thaliana reference genome.</title>
        <authorList>
            <person name="Cheng C.Y."/>
            <person name="Krishnakumar V."/>
            <person name="Chan A.P."/>
            <person name="Thibaud-Nissen F."/>
            <person name="Schobel S."/>
            <person name="Town C.D."/>
        </authorList>
    </citation>
    <scope>GENOME REANNOTATION</scope>
    <source>
        <strain>cv. Columbia</strain>
    </source>
</reference>
<reference key="3">
    <citation type="submission" date="2009-03" db="EMBL/GenBank/DDBJ databases">
        <title>ORF cloning and analysis of Arabidopsis transcription factor genes.</title>
        <authorList>
            <person name="Fujita M."/>
            <person name="Mizukado S."/>
            <person name="Seki M."/>
            <person name="Shinozaki K."/>
            <person name="Mitsuda N."/>
            <person name="Takiguchi Y."/>
            <person name="Takagi M."/>
        </authorList>
    </citation>
    <scope>NUCLEOTIDE SEQUENCE [LARGE SCALE MRNA]</scope>
</reference>
<reference key="4">
    <citation type="journal article" date="2002" name="Trends Plant Sci.">
        <title>The Dof family of plant transcription factors.</title>
        <authorList>
            <person name="Yanagisawa S."/>
        </authorList>
    </citation>
    <scope>GENE FAMILY</scope>
    <scope>NOMENCLATURE</scope>
</reference>
<dbReference type="EMBL" id="AC007519">
    <property type="protein sequence ID" value="AAD46020.1"/>
    <property type="molecule type" value="Genomic_DNA"/>
</dbReference>
<dbReference type="EMBL" id="CP002684">
    <property type="protein sequence ID" value="AEE32197.1"/>
    <property type="molecule type" value="Genomic_DNA"/>
</dbReference>
<dbReference type="EMBL" id="AB493502">
    <property type="protein sequence ID" value="BAH30340.1"/>
    <property type="molecule type" value="mRNA"/>
</dbReference>
<dbReference type="PIR" id="E96517">
    <property type="entry name" value="E96517"/>
</dbReference>
<dbReference type="RefSeq" id="NP_564510.1">
    <property type="nucleotide sequence ID" value="NM_103658.3"/>
</dbReference>
<dbReference type="BioGRID" id="26400">
    <property type="interactions" value="7"/>
</dbReference>
<dbReference type="FunCoup" id="Q9SX97">
    <property type="interactions" value="3"/>
</dbReference>
<dbReference type="IntAct" id="Q9SX97">
    <property type="interactions" value="7"/>
</dbReference>
<dbReference type="STRING" id="3702.Q9SX97"/>
<dbReference type="PaxDb" id="3702-AT1G47655.1"/>
<dbReference type="EnsemblPlants" id="AT1G47655.1">
    <property type="protein sequence ID" value="AT1G47655.1"/>
    <property type="gene ID" value="AT1G47655"/>
</dbReference>
<dbReference type="GeneID" id="841175"/>
<dbReference type="Gramene" id="AT1G47655.1">
    <property type="protein sequence ID" value="AT1G47655.1"/>
    <property type="gene ID" value="AT1G47655"/>
</dbReference>
<dbReference type="KEGG" id="ath:AT1G47655"/>
<dbReference type="Araport" id="AT1G47655"/>
<dbReference type="TAIR" id="AT1G47655"/>
<dbReference type="eggNOG" id="ENOG502SRCV">
    <property type="taxonomic scope" value="Eukaryota"/>
</dbReference>
<dbReference type="HOGENOM" id="CLU_036438_6_0_1"/>
<dbReference type="InParanoid" id="Q9SX97"/>
<dbReference type="OMA" id="MSIGYLG"/>
<dbReference type="PRO" id="PR:Q9SX97"/>
<dbReference type="Proteomes" id="UP000006548">
    <property type="component" value="Chromosome 1"/>
</dbReference>
<dbReference type="ExpressionAtlas" id="Q9SX97">
    <property type="expression patterns" value="baseline and differential"/>
</dbReference>
<dbReference type="GO" id="GO:0005634">
    <property type="term" value="C:nucleus"/>
    <property type="evidence" value="ECO:0007669"/>
    <property type="project" value="UniProtKB-SubCell"/>
</dbReference>
<dbReference type="GO" id="GO:0003677">
    <property type="term" value="F:DNA binding"/>
    <property type="evidence" value="ECO:0007669"/>
    <property type="project" value="UniProtKB-KW"/>
</dbReference>
<dbReference type="GO" id="GO:0003700">
    <property type="term" value="F:DNA-binding transcription factor activity"/>
    <property type="evidence" value="ECO:0000250"/>
    <property type="project" value="TAIR"/>
</dbReference>
<dbReference type="GO" id="GO:0008270">
    <property type="term" value="F:zinc ion binding"/>
    <property type="evidence" value="ECO:0007669"/>
    <property type="project" value="UniProtKB-KW"/>
</dbReference>
<dbReference type="GO" id="GO:0006355">
    <property type="term" value="P:regulation of DNA-templated transcription"/>
    <property type="evidence" value="ECO:0000304"/>
    <property type="project" value="TAIR"/>
</dbReference>
<dbReference type="InterPro" id="IPR045174">
    <property type="entry name" value="Dof"/>
</dbReference>
<dbReference type="InterPro" id="IPR003851">
    <property type="entry name" value="Znf_Dof"/>
</dbReference>
<dbReference type="PANTHER" id="PTHR31992">
    <property type="entry name" value="DOF ZINC FINGER PROTEIN DOF1.4-RELATED"/>
    <property type="match status" value="1"/>
</dbReference>
<dbReference type="PANTHER" id="PTHR31992:SF312">
    <property type="entry name" value="DOF ZINC FINGER PROTEIN DOF1.6"/>
    <property type="match status" value="1"/>
</dbReference>
<dbReference type="Pfam" id="PF02701">
    <property type="entry name" value="Zn_ribbon_Dof"/>
    <property type="match status" value="1"/>
</dbReference>
<dbReference type="PROSITE" id="PS01361">
    <property type="entry name" value="ZF_DOF_1"/>
    <property type="match status" value="1"/>
</dbReference>
<dbReference type="PROSITE" id="PS50884">
    <property type="entry name" value="ZF_DOF_2"/>
    <property type="match status" value="1"/>
</dbReference>
<evidence type="ECO:0000250" key="1"/>
<evidence type="ECO:0000255" key="2">
    <source>
        <dbReference type="PROSITE-ProRule" id="PRU00071"/>
    </source>
</evidence>
<evidence type="ECO:0000256" key="3">
    <source>
        <dbReference type="SAM" id="MobiDB-lite"/>
    </source>
</evidence>
<evidence type="ECO:0000305" key="4"/>
<keyword id="KW-0238">DNA-binding</keyword>
<keyword id="KW-0479">Metal-binding</keyword>
<keyword id="KW-0539">Nucleus</keyword>
<keyword id="KW-1185">Reference proteome</keyword>
<keyword id="KW-0804">Transcription</keyword>
<keyword id="KW-0805">Transcription regulation</keyword>
<keyword id="KW-0862">Zinc</keyword>
<keyword id="KW-0863">Zinc-finger</keyword>
<sequence>MPSEPNQTRPTRVQPSTAAYPPPNLAEPLPCPRCNSTTTKFCYYNNYNLAQPRYYCKSCRRYWTQGGTLRDVPVGGGTRRSSSKRHRSFSTTATSSSSSSSVITTTTQEPATTEASQTKVTNLISGHGSFASLLGLGSGNGGLDYGFGYGYGLEEMSIGYLGDSSVGEIPVVDGCGGDTWQIGEIEGKSGGDSLIWPGLEISMQTNDVK</sequence>
<accession>Q9SX97</accession>
<accession>C0SUZ9</accession>
<name>DOF16_ARATH</name>
<organism>
    <name type="scientific">Arabidopsis thaliana</name>
    <name type="common">Mouse-ear cress</name>
    <dbReference type="NCBI Taxonomy" id="3702"/>
    <lineage>
        <taxon>Eukaryota</taxon>
        <taxon>Viridiplantae</taxon>
        <taxon>Streptophyta</taxon>
        <taxon>Embryophyta</taxon>
        <taxon>Tracheophyta</taxon>
        <taxon>Spermatophyta</taxon>
        <taxon>Magnoliopsida</taxon>
        <taxon>eudicotyledons</taxon>
        <taxon>Gunneridae</taxon>
        <taxon>Pentapetalae</taxon>
        <taxon>rosids</taxon>
        <taxon>malvids</taxon>
        <taxon>Brassicales</taxon>
        <taxon>Brassicaceae</taxon>
        <taxon>Camelineae</taxon>
        <taxon>Arabidopsis</taxon>
    </lineage>
</organism>